<keyword id="KW-0687">Ribonucleoprotein</keyword>
<keyword id="KW-0689">Ribosomal protein</keyword>
<dbReference type="EMBL" id="CP000969">
    <property type="protein sequence ID" value="ACB09700.1"/>
    <property type="molecule type" value="Genomic_DNA"/>
</dbReference>
<dbReference type="RefSeq" id="WP_004081758.1">
    <property type="nucleotide sequence ID" value="NC_010483.1"/>
</dbReference>
<dbReference type="SMR" id="B1LBK2"/>
<dbReference type="KEGG" id="trq:TRQ2_1356"/>
<dbReference type="HOGENOM" id="CLU_129938_2_0_0"/>
<dbReference type="Proteomes" id="UP000001687">
    <property type="component" value="Chromosome"/>
</dbReference>
<dbReference type="GO" id="GO:1990904">
    <property type="term" value="C:ribonucleoprotein complex"/>
    <property type="evidence" value="ECO:0007669"/>
    <property type="project" value="UniProtKB-KW"/>
</dbReference>
<dbReference type="GO" id="GO:0005840">
    <property type="term" value="C:ribosome"/>
    <property type="evidence" value="ECO:0007669"/>
    <property type="project" value="UniProtKB-KW"/>
</dbReference>
<dbReference type="GO" id="GO:0003735">
    <property type="term" value="F:structural constituent of ribosome"/>
    <property type="evidence" value="ECO:0007669"/>
    <property type="project" value="InterPro"/>
</dbReference>
<dbReference type="GO" id="GO:0006412">
    <property type="term" value="P:translation"/>
    <property type="evidence" value="ECO:0007669"/>
    <property type="project" value="UniProtKB-UniRule"/>
</dbReference>
<dbReference type="FunFam" id="1.10.287.3980:FF:000001">
    <property type="entry name" value="Mitochondrial ribosomal protein L34"/>
    <property type="match status" value="1"/>
</dbReference>
<dbReference type="Gene3D" id="1.10.287.3980">
    <property type="match status" value="1"/>
</dbReference>
<dbReference type="HAMAP" id="MF_00391">
    <property type="entry name" value="Ribosomal_bL34"/>
    <property type="match status" value="1"/>
</dbReference>
<dbReference type="InterPro" id="IPR000271">
    <property type="entry name" value="Ribosomal_bL34"/>
</dbReference>
<dbReference type="InterPro" id="IPR020939">
    <property type="entry name" value="Ribosomal_bL34_CS"/>
</dbReference>
<dbReference type="NCBIfam" id="TIGR01030">
    <property type="entry name" value="rpmH_bact"/>
    <property type="match status" value="1"/>
</dbReference>
<dbReference type="PANTHER" id="PTHR14503:SF4">
    <property type="entry name" value="LARGE RIBOSOMAL SUBUNIT PROTEIN BL34M"/>
    <property type="match status" value="1"/>
</dbReference>
<dbReference type="PANTHER" id="PTHR14503">
    <property type="entry name" value="MITOCHONDRIAL RIBOSOMAL PROTEIN 34 FAMILY MEMBER"/>
    <property type="match status" value="1"/>
</dbReference>
<dbReference type="Pfam" id="PF00468">
    <property type="entry name" value="Ribosomal_L34"/>
    <property type="match status" value="1"/>
</dbReference>
<dbReference type="PROSITE" id="PS00784">
    <property type="entry name" value="RIBOSOMAL_L34"/>
    <property type="match status" value="1"/>
</dbReference>
<protein>
    <recommendedName>
        <fullName evidence="1">Large ribosomal subunit protein bL34</fullName>
    </recommendedName>
    <alternativeName>
        <fullName evidence="3">50S ribosomal protein L34</fullName>
    </alternativeName>
</protein>
<reference key="1">
    <citation type="journal article" date="2011" name="J. Bacteriol.">
        <title>Genome sequence of Thermotoga sp. strain RQ2, a hyperthermophilic bacterium isolated from a geothermally heated region of the seafloor near Ribeira Quente, the Azores.</title>
        <authorList>
            <person name="Swithers K.S."/>
            <person name="DiPippo J.L."/>
            <person name="Bruce D.C."/>
            <person name="Detter C."/>
            <person name="Tapia R."/>
            <person name="Han S."/>
            <person name="Saunders E."/>
            <person name="Goodwin L.A."/>
            <person name="Han J."/>
            <person name="Woyke T."/>
            <person name="Pitluck S."/>
            <person name="Pennacchio L."/>
            <person name="Nolan M."/>
            <person name="Mikhailova N."/>
            <person name="Lykidis A."/>
            <person name="Land M.L."/>
            <person name="Brettin T."/>
            <person name="Stetter K.O."/>
            <person name="Nelson K.E."/>
            <person name="Gogarten J.P."/>
            <person name="Noll K.M."/>
        </authorList>
    </citation>
    <scope>NUCLEOTIDE SEQUENCE [LARGE SCALE GENOMIC DNA]</scope>
    <source>
        <strain>RQ2</strain>
    </source>
</reference>
<sequence length="44" mass="5504">MKRTYQPSRRKRKRTHGFLARKRTPGGRRVLKNRRRKGRWRLTV</sequence>
<organism>
    <name type="scientific">Thermotoga sp. (strain RQ2)</name>
    <dbReference type="NCBI Taxonomy" id="126740"/>
    <lineage>
        <taxon>Bacteria</taxon>
        <taxon>Thermotogati</taxon>
        <taxon>Thermotogota</taxon>
        <taxon>Thermotogae</taxon>
        <taxon>Thermotogales</taxon>
        <taxon>Thermotogaceae</taxon>
        <taxon>Thermotoga</taxon>
    </lineage>
</organism>
<feature type="chain" id="PRO_1000196133" description="Large ribosomal subunit protein bL34">
    <location>
        <begin position="1"/>
        <end position="44"/>
    </location>
</feature>
<feature type="region of interest" description="Disordered" evidence="2">
    <location>
        <begin position="1"/>
        <end position="44"/>
    </location>
</feature>
<evidence type="ECO:0000255" key="1">
    <source>
        <dbReference type="HAMAP-Rule" id="MF_00391"/>
    </source>
</evidence>
<evidence type="ECO:0000256" key="2">
    <source>
        <dbReference type="SAM" id="MobiDB-lite"/>
    </source>
</evidence>
<evidence type="ECO:0000305" key="3"/>
<gene>
    <name evidence="1" type="primary">rpmH</name>
    <name type="ordered locus">TRQ2_1356</name>
</gene>
<proteinExistence type="inferred from homology"/>
<accession>B1LBK2</accession>
<name>RL34_THESQ</name>
<comment type="similarity">
    <text evidence="1">Belongs to the bacterial ribosomal protein bL34 family.</text>
</comment>